<feature type="chain" id="PRO_0000095583" description="Ferric uptake regulation protein">
    <location>
        <begin position="1"/>
        <end position="165"/>
    </location>
</feature>
<feature type="region of interest" description="DNA-binding" evidence="1">
    <location>
        <begin position="1"/>
        <end position="91"/>
    </location>
</feature>
<feature type="region of interest" description="Dimerization" evidence="1">
    <location>
        <begin position="92"/>
        <end position="165"/>
    </location>
</feature>
<feature type="binding site" evidence="1">
    <location>
        <position position="38"/>
    </location>
    <ligand>
        <name>Zn(2+)</name>
        <dbReference type="ChEBI" id="CHEBI:29105"/>
    </ligand>
</feature>
<feature type="binding site" evidence="1">
    <location>
        <position position="86"/>
    </location>
    <ligand>
        <name>Zn(2+)</name>
        <dbReference type="ChEBI" id="CHEBI:29105"/>
    </ligand>
</feature>
<feature type="binding site" evidence="1">
    <location>
        <position position="94"/>
    </location>
    <ligand>
        <name>Fe cation</name>
        <dbReference type="ChEBI" id="CHEBI:24875"/>
    </ligand>
</feature>
<feature type="binding site" evidence="1">
    <location>
        <position position="96"/>
    </location>
    <ligand>
        <name>Fe cation</name>
        <dbReference type="ChEBI" id="CHEBI:24875"/>
    </ligand>
</feature>
<feature type="binding site" evidence="1">
    <location>
        <position position="97"/>
    </location>
    <ligand>
        <name>Zn(2+)</name>
        <dbReference type="ChEBI" id="CHEBI:29105"/>
    </ligand>
</feature>
<feature type="binding site" evidence="1">
    <location>
        <position position="100"/>
    </location>
    <ligand>
        <name>Zn(2+)</name>
        <dbReference type="ChEBI" id="CHEBI:29105"/>
    </ligand>
</feature>
<feature type="binding site" evidence="1">
    <location>
        <position position="103"/>
    </location>
    <ligand>
        <name>Zn(2+)</name>
        <dbReference type="ChEBI" id="CHEBI:29105"/>
    </ligand>
</feature>
<feature type="binding site" evidence="1">
    <location>
        <position position="108"/>
    </location>
    <ligand>
        <name>Zn(2+)</name>
        <dbReference type="ChEBI" id="CHEBI:29105"/>
    </ligand>
</feature>
<comment type="function">
    <text evidence="1">Acts as a global negative controlling element, employing Fe(2+) as a cofactor to bind the operator of the repressed genes.</text>
</comment>
<comment type="subunit">
    <text evidence="1">Homodimer.</text>
</comment>
<comment type="subcellular location">
    <subcellularLocation>
        <location evidence="1">Cytoplasm</location>
    </subcellularLocation>
</comment>
<comment type="similarity">
    <text evidence="2">Belongs to the Fur family.</text>
</comment>
<sequence>MSYTADSLKAELNARGWRLTPQREKILTIFQNLPEGEHLSAEELHHRLEEEREKISLSTVYRSVKLMSRMGILRELELAEGHKHYELQQASPHHHHHVVCVQCNRTIEFKNDSILKQSLKQCEKEGFQLIDCQLTVTTICPEAIRMGWPSTLPSNWACTRSISLA</sequence>
<keyword id="KW-0963">Cytoplasm</keyword>
<keyword id="KW-0238">DNA-binding</keyword>
<keyword id="KW-0408">Iron</keyword>
<keyword id="KW-0479">Metal-binding</keyword>
<keyword id="KW-1185">Reference proteome</keyword>
<keyword id="KW-0678">Repressor</keyword>
<keyword id="KW-0804">Transcription</keyword>
<keyword id="KW-0805">Transcription regulation</keyword>
<keyword id="KW-0862">Zinc</keyword>
<gene>
    <name type="primary">fur</name>
    <name type="ordered locus">sll0567</name>
</gene>
<evidence type="ECO:0000250" key="1"/>
<evidence type="ECO:0000305" key="2"/>
<proteinExistence type="inferred from homology"/>
<reference key="1">
    <citation type="journal article" date="1996" name="DNA Res.">
        <title>Sequence analysis of the genome of the unicellular cyanobacterium Synechocystis sp. strain PCC6803. II. Sequence determination of the entire genome and assignment of potential protein-coding regions.</title>
        <authorList>
            <person name="Kaneko T."/>
            <person name="Sato S."/>
            <person name="Kotani H."/>
            <person name="Tanaka A."/>
            <person name="Asamizu E."/>
            <person name="Nakamura Y."/>
            <person name="Miyajima N."/>
            <person name="Hirosawa M."/>
            <person name="Sugiura M."/>
            <person name="Sasamoto S."/>
            <person name="Kimura T."/>
            <person name="Hosouchi T."/>
            <person name="Matsuno A."/>
            <person name="Muraki A."/>
            <person name="Nakazaki N."/>
            <person name="Naruo K."/>
            <person name="Okumura S."/>
            <person name="Shimpo S."/>
            <person name="Takeuchi C."/>
            <person name="Wada T."/>
            <person name="Watanabe A."/>
            <person name="Yamada M."/>
            <person name="Yasuda M."/>
            <person name="Tabata S."/>
        </authorList>
    </citation>
    <scope>NUCLEOTIDE SEQUENCE [LARGE SCALE GENOMIC DNA]</scope>
    <source>
        <strain>ATCC 27184 / PCC 6803 / Kazusa</strain>
    </source>
</reference>
<organism>
    <name type="scientific">Synechocystis sp. (strain ATCC 27184 / PCC 6803 / Kazusa)</name>
    <dbReference type="NCBI Taxonomy" id="1111708"/>
    <lineage>
        <taxon>Bacteria</taxon>
        <taxon>Bacillati</taxon>
        <taxon>Cyanobacteriota</taxon>
        <taxon>Cyanophyceae</taxon>
        <taxon>Synechococcales</taxon>
        <taxon>Merismopediaceae</taxon>
        <taxon>Synechocystis</taxon>
    </lineage>
</organism>
<accession>P74739</accession>
<protein>
    <recommendedName>
        <fullName>Ferric uptake regulation protein</fullName>
        <shortName>Ferric uptake regulator</shortName>
    </recommendedName>
</protein>
<name>FUR_SYNY3</name>
<dbReference type="EMBL" id="BA000022">
    <property type="protein sequence ID" value="BAA18859.1"/>
    <property type="molecule type" value="Genomic_DNA"/>
</dbReference>
<dbReference type="PIR" id="S76947">
    <property type="entry name" value="S76947"/>
</dbReference>
<dbReference type="SMR" id="P74739"/>
<dbReference type="FunCoup" id="P74739">
    <property type="interactions" value="131"/>
</dbReference>
<dbReference type="STRING" id="1148.gene:10500631"/>
<dbReference type="PaxDb" id="1148-1653949"/>
<dbReference type="EnsemblBacteria" id="BAA18859">
    <property type="protein sequence ID" value="BAA18859"/>
    <property type="gene ID" value="BAA18859"/>
</dbReference>
<dbReference type="KEGG" id="syn:sll0567"/>
<dbReference type="eggNOG" id="COG0735">
    <property type="taxonomic scope" value="Bacteria"/>
</dbReference>
<dbReference type="InParanoid" id="P74739"/>
<dbReference type="PhylomeDB" id="P74739"/>
<dbReference type="Proteomes" id="UP000001425">
    <property type="component" value="Chromosome"/>
</dbReference>
<dbReference type="CollecTF" id="EXPREG_00000c10"/>
<dbReference type="GO" id="GO:0005737">
    <property type="term" value="C:cytoplasm"/>
    <property type="evidence" value="ECO:0007669"/>
    <property type="project" value="UniProtKB-SubCell"/>
</dbReference>
<dbReference type="GO" id="GO:0003700">
    <property type="term" value="F:DNA-binding transcription factor activity"/>
    <property type="evidence" value="ECO:0000318"/>
    <property type="project" value="GO_Central"/>
</dbReference>
<dbReference type="GO" id="GO:0000976">
    <property type="term" value="F:transcription cis-regulatory region binding"/>
    <property type="evidence" value="ECO:0000318"/>
    <property type="project" value="GO_Central"/>
</dbReference>
<dbReference type="GO" id="GO:0008270">
    <property type="term" value="F:zinc ion binding"/>
    <property type="evidence" value="ECO:0000318"/>
    <property type="project" value="GO_Central"/>
</dbReference>
<dbReference type="GO" id="GO:0045892">
    <property type="term" value="P:negative regulation of DNA-templated transcription"/>
    <property type="evidence" value="ECO:0000270"/>
    <property type="project" value="CollecTF"/>
</dbReference>
<dbReference type="GO" id="GO:1900376">
    <property type="term" value="P:regulation of secondary metabolite biosynthetic process"/>
    <property type="evidence" value="ECO:0000318"/>
    <property type="project" value="GO_Central"/>
</dbReference>
<dbReference type="CDD" id="cd07153">
    <property type="entry name" value="Fur_like"/>
    <property type="match status" value="1"/>
</dbReference>
<dbReference type="FunFam" id="3.30.1490.190:FF:000008">
    <property type="entry name" value="Ferric uptake regulator, Fur family"/>
    <property type="match status" value="1"/>
</dbReference>
<dbReference type="Gene3D" id="3.30.1490.190">
    <property type="match status" value="1"/>
</dbReference>
<dbReference type="Gene3D" id="1.10.10.10">
    <property type="entry name" value="Winged helix-like DNA-binding domain superfamily/Winged helix DNA-binding domain"/>
    <property type="match status" value="1"/>
</dbReference>
<dbReference type="InterPro" id="IPR002481">
    <property type="entry name" value="FUR"/>
</dbReference>
<dbReference type="InterPro" id="IPR043135">
    <property type="entry name" value="Fur_C"/>
</dbReference>
<dbReference type="InterPro" id="IPR036388">
    <property type="entry name" value="WH-like_DNA-bd_sf"/>
</dbReference>
<dbReference type="InterPro" id="IPR036390">
    <property type="entry name" value="WH_DNA-bd_sf"/>
</dbReference>
<dbReference type="PANTHER" id="PTHR33202:SF19">
    <property type="entry name" value="FERRIC UPTAKE REGULATION PROTEIN"/>
    <property type="match status" value="1"/>
</dbReference>
<dbReference type="PANTHER" id="PTHR33202">
    <property type="entry name" value="ZINC UPTAKE REGULATION PROTEIN"/>
    <property type="match status" value="1"/>
</dbReference>
<dbReference type="Pfam" id="PF01475">
    <property type="entry name" value="FUR"/>
    <property type="match status" value="1"/>
</dbReference>
<dbReference type="SUPFAM" id="SSF46785">
    <property type="entry name" value="Winged helix' DNA-binding domain"/>
    <property type="match status" value="1"/>
</dbReference>